<feature type="chain" id="PRO_1000138834" description="Orotate phosphoribosyltransferase">
    <location>
        <begin position="1"/>
        <end position="219"/>
    </location>
</feature>
<feature type="binding site" description="in other chain" evidence="1">
    <location>
        <position position="26"/>
    </location>
    <ligand>
        <name>5-phospho-alpha-D-ribose 1-diphosphate</name>
        <dbReference type="ChEBI" id="CHEBI:58017"/>
        <note>ligand shared between dimeric partners</note>
    </ligand>
</feature>
<feature type="binding site" evidence="1">
    <location>
        <begin position="34"/>
        <end position="35"/>
    </location>
    <ligand>
        <name>orotate</name>
        <dbReference type="ChEBI" id="CHEBI:30839"/>
    </ligand>
</feature>
<feature type="binding site" description="in other chain" evidence="1">
    <location>
        <begin position="72"/>
        <end position="73"/>
    </location>
    <ligand>
        <name>5-phospho-alpha-D-ribose 1-diphosphate</name>
        <dbReference type="ChEBI" id="CHEBI:58017"/>
        <note>ligand shared between dimeric partners</note>
    </ligand>
</feature>
<feature type="binding site" evidence="1">
    <location>
        <position position="98"/>
    </location>
    <ligand>
        <name>5-phospho-alpha-D-ribose 1-diphosphate</name>
        <dbReference type="ChEBI" id="CHEBI:58017"/>
        <note>ligand shared between dimeric partners</note>
    </ligand>
</feature>
<feature type="binding site" description="in other chain" evidence="1">
    <location>
        <position position="99"/>
    </location>
    <ligand>
        <name>5-phospho-alpha-D-ribose 1-diphosphate</name>
        <dbReference type="ChEBI" id="CHEBI:58017"/>
        <note>ligand shared between dimeric partners</note>
    </ligand>
</feature>
<feature type="binding site" evidence="1">
    <location>
        <position position="102"/>
    </location>
    <ligand>
        <name>5-phospho-alpha-D-ribose 1-diphosphate</name>
        <dbReference type="ChEBI" id="CHEBI:58017"/>
        <note>ligand shared between dimeric partners</note>
    </ligand>
</feature>
<feature type="binding site" evidence="1">
    <location>
        <position position="104"/>
    </location>
    <ligand>
        <name>5-phospho-alpha-D-ribose 1-diphosphate</name>
        <dbReference type="ChEBI" id="CHEBI:58017"/>
        <note>ligand shared between dimeric partners</note>
    </ligand>
</feature>
<feature type="binding site" description="in other chain" evidence="1">
    <location>
        <begin position="124"/>
        <end position="132"/>
    </location>
    <ligand>
        <name>5-phospho-alpha-D-ribose 1-diphosphate</name>
        <dbReference type="ChEBI" id="CHEBI:58017"/>
        <note>ligand shared between dimeric partners</note>
    </ligand>
</feature>
<feature type="binding site" evidence="1">
    <location>
        <position position="128"/>
    </location>
    <ligand>
        <name>orotate</name>
        <dbReference type="ChEBI" id="CHEBI:30839"/>
    </ligand>
</feature>
<feature type="binding site" evidence="1">
    <location>
        <position position="156"/>
    </location>
    <ligand>
        <name>orotate</name>
        <dbReference type="ChEBI" id="CHEBI:30839"/>
    </ligand>
</feature>
<reference key="1">
    <citation type="submission" date="2008-06" db="EMBL/GenBank/DDBJ databases">
        <title>Complete sequence of Stenotrophomonas maltophilia R551-3.</title>
        <authorList>
            <consortium name="US DOE Joint Genome Institute"/>
            <person name="Lucas S."/>
            <person name="Copeland A."/>
            <person name="Lapidus A."/>
            <person name="Glavina del Rio T."/>
            <person name="Dalin E."/>
            <person name="Tice H."/>
            <person name="Pitluck S."/>
            <person name="Chain P."/>
            <person name="Malfatti S."/>
            <person name="Shin M."/>
            <person name="Vergez L."/>
            <person name="Lang D."/>
            <person name="Schmutz J."/>
            <person name="Larimer F."/>
            <person name="Land M."/>
            <person name="Hauser L."/>
            <person name="Kyrpides N."/>
            <person name="Mikhailova N."/>
            <person name="Taghavi S."/>
            <person name="Monchy S."/>
            <person name="Newman L."/>
            <person name="Vangronsveld J."/>
            <person name="van der Lelie D."/>
            <person name="Richardson P."/>
        </authorList>
    </citation>
    <scope>NUCLEOTIDE SEQUENCE [LARGE SCALE GENOMIC DNA]</scope>
    <source>
        <strain>R551-3</strain>
    </source>
</reference>
<sequence>MSDHRHRFLQLALTADALRFGQFTLKSGRLSPYFFNAGRFDSGSLLSQLGACYSDAIDATGIKYDVVFGPAYKGIPLATAMACELAQRGRELPLSFNRKEAKAHGEGGQLIGADMNGKRVLIVDDVITAGTAIREALGIIRDAGGIPAGIVVALDRQEIASDTDHRSAAQAVAEEAGIPVIAVATLADLLDFASGNPELVGYRQPLEAYRAQYGVRSIR</sequence>
<dbReference type="EC" id="2.4.2.10" evidence="1"/>
<dbReference type="EMBL" id="CP001111">
    <property type="protein sequence ID" value="ACF49999.1"/>
    <property type="molecule type" value="Genomic_DNA"/>
</dbReference>
<dbReference type="RefSeq" id="WP_012509823.1">
    <property type="nucleotide sequence ID" value="NC_011071.1"/>
</dbReference>
<dbReference type="SMR" id="B4STF6"/>
<dbReference type="STRING" id="391008.Smal_0294"/>
<dbReference type="KEGG" id="smt:Smal_0294"/>
<dbReference type="eggNOG" id="COG0461">
    <property type="taxonomic scope" value="Bacteria"/>
</dbReference>
<dbReference type="HOGENOM" id="CLU_074878_0_1_6"/>
<dbReference type="OrthoDB" id="9779060at2"/>
<dbReference type="UniPathway" id="UPA00070">
    <property type="reaction ID" value="UER00119"/>
</dbReference>
<dbReference type="Proteomes" id="UP000001867">
    <property type="component" value="Chromosome"/>
</dbReference>
<dbReference type="GO" id="GO:0005737">
    <property type="term" value="C:cytoplasm"/>
    <property type="evidence" value="ECO:0007669"/>
    <property type="project" value="TreeGrafter"/>
</dbReference>
<dbReference type="GO" id="GO:0000287">
    <property type="term" value="F:magnesium ion binding"/>
    <property type="evidence" value="ECO:0007669"/>
    <property type="project" value="UniProtKB-UniRule"/>
</dbReference>
<dbReference type="GO" id="GO:0004588">
    <property type="term" value="F:orotate phosphoribosyltransferase activity"/>
    <property type="evidence" value="ECO:0007669"/>
    <property type="project" value="UniProtKB-UniRule"/>
</dbReference>
<dbReference type="GO" id="GO:0006207">
    <property type="term" value="P:'de novo' pyrimidine nucleobase biosynthetic process"/>
    <property type="evidence" value="ECO:0007669"/>
    <property type="project" value="TreeGrafter"/>
</dbReference>
<dbReference type="GO" id="GO:0044205">
    <property type="term" value="P:'de novo' UMP biosynthetic process"/>
    <property type="evidence" value="ECO:0007669"/>
    <property type="project" value="UniProtKB-UniRule"/>
</dbReference>
<dbReference type="GO" id="GO:0046132">
    <property type="term" value="P:pyrimidine ribonucleoside biosynthetic process"/>
    <property type="evidence" value="ECO:0007669"/>
    <property type="project" value="TreeGrafter"/>
</dbReference>
<dbReference type="CDD" id="cd06223">
    <property type="entry name" value="PRTases_typeI"/>
    <property type="match status" value="1"/>
</dbReference>
<dbReference type="FunFam" id="3.40.50.2020:FF:000052">
    <property type="entry name" value="Orotate phosphoribosyltransferase"/>
    <property type="match status" value="1"/>
</dbReference>
<dbReference type="Gene3D" id="3.40.50.2020">
    <property type="match status" value="1"/>
</dbReference>
<dbReference type="HAMAP" id="MF_01208">
    <property type="entry name" value="PyrE"/>
    <property type="match status" value="1"/>
</dbReference>
<dbReference type="InterPro" id="IPR023031">
    <property type="entry name" value="OPRT"/>
</dbReference>
<dbReference type="InterPro" id="IPR004467">
    <property type="entry name" value="Or_phspho_trans_dom"/>
</dbReference>
<dbReference type="InterPro" id="IPR000836">
    <property type="entry name" value="PRibTrfase_dom"/>
</dbReference>
<dbReference type="InterPro" id="IPR029057">
    <property type="entry name" value="PRTase-like"/>
</dbReference>
<dbReference type="NCBIfam" id="TIGR00336">
    <property type="entry name" value="pyrE"/>
    <property type="match status" value="1"/>
</dbReference>
<dbReference type="PANTHER" id="PTHR46683">
    <property type="entry name" value="OROTATE PHOSPHORIBOSYLTRANSFERASE 1-RELATED"/>
    <property type="match status" value="1"/>
</dbReference>
<dbReference type="PANTHER" id="PTHR46683:SF1">
    <property type="entry name" value="OROTATE PHOSPHORIBOSYLTRANSFERASE 1-RELATED"/>
    <property type="match status" value="1"/>
</dbReference>
<dbReference type="Pfam" id="PF00156">
    <property type="entry name" value="Pribosyltran"/>
    <property type="match status" value="1"/>
</dbReference>
<dbReference type="SUPFAM" id="SSF53271">
    <property type="entry name" value="PRTase-like"/>
    <property type="match status" value="1"/>
</dbReference>
<dbReference type="PROSITE" id="PS00103">
    <property type="entry name" value="PUR_PYR_PR_TRANSFER"/>
    <property type="match status" value="1"/>
</dbReference>
<protein>
    <recommendedName>
        <fullName evidence="1">Orotate phosphoribosyltransferase</fullName>
        <shortName evidence="1">OPRT</shortName>
        <shortName evidence="1">OPRTase</shortName>
        <ecNumber evidence="1">2.4.2.10</ecNumber>
    </recommendedName>
</protein>
<organism>
    <name type="scientific">Stenotrophomonas maltophilia (strain R551-3)</name>
    <dbReference type="NCBI Taxonomy" id="391008"/>
    <lineage>
        <taxon>Bacteria</taxon>
        <taxon>Pseudomonadati</taxon>
        <taxon>Pseudomonadota</taxon>
        <taxon>Gammaproteobacteria</taxon>
        <taxon>Lysobacterales</taxon>
        <taxon>Lysobacteraceae</taxon>
        <taxon>Stenotrophomonas</taxon>
        <taxon>Stenotrophomonas maltophilia group</taxon>
    </lineage>
</organism>
<name>PYRE_STRM5</name>
<keyword id="KW-0328">Glycosyltransferase</keyword>
<keyword id="KW-0460">Magnesium</keyword>
<keyword id="KW-0665">Pyrimidine biosynthesis</keyword>
<keyword id="KW-0808">Transferase</keyword>
<accession>B4STF6</accession>
<gene>
    <name evidence="1" type="primary">pyrE</name>
    <name type="ordered locus">Smal_0294</name>
</gene>
<comment type="function">
    <text evidence="1">Catalyzes the transfer of a ribosyl phosphate group from 5-phosphoribose 1-diphosphate to orotate, leading to the formation of orotidine monophosphate (OMP).</text>
</comment>
<comment type="catalytic activity">
    <reaction evidence="1">
        <text>orotidine 5'-phosphate + diphosphate = orotate + 5-phospho-alpha-D-ribose 1-diphosphate</text>
        <dbReference type="Rhea" id="RHEA:10380"/>
        <dbReference type="ChEBI" id="CHEBI:30839"/>
        <dbReference type="ChEBI" id="CHEBI:33019"/>
        <dbReference type="ChEBI" id="CHEBI:57538"/>
        <dbReference type="ChEBI" id="CHEBI:58017"/>
        <dbReference type="EC" id="2.4.2.10"/>
    </reaction>
</comment>
<comment type="cofactor">
    <cofactor evidence="1">
        <name>Mg(2+)</name>
        <dbReference type="ChEBI" id="CHEBI:18420"/>
    </cofactor>
</comment>
<comment type="pathway">
    <text evidence="1">Pyrimidine metabolism; UMP biosynthesis via de novo pathway; UMP from orotate: step 1/2.</text>
</comment>
<comment type="subunit">
    <text evidence="1">Homodimer.</text>
</comment>
<comment type="similarity">
    <text evidence="1">Belongs to the purine/pyrimidine phosphoribosyltransferase family. PyrE subfamily.</text>
</comment>
<evidence type="ECO:0000255" key="1">
    <source>
        <dbReference type="HAMAP-Rule" id="MF_01208"/>
    </source>
</evidence>
<proteinExistence type="inferred from homology"/>